<dbReference type="EC" id="6.1.1.23" evidence="1"/>
<dbReference type="EMBL" id="CP001598">
    <property type="protein sequence ID" value="ACQ46083.1"/>
    <property type="molecule type" value="Genomic_DNA"/>
</dbReference>
<dbReference type="RefSeq" id="WP_000840916.1">
    <property type="nucleotide sequence ID" value="NC_012659.1"/>
</dbReference>
<dbReference type="SMR" id="C3P990"/>
<dbReference type="GeneID" id="45024275"/>
<dbReference type="KEGG" id="bai:BAA_4650"/>
<dbReference type="HOGENOM" id="CLU_014330_3_2_9"/>
<dbReference type="GO" id="GO:0005737">
    <property type="term" value="C:cytoplasm"/>
    <property type="evidence" value="ECO:0007669"/>
    <property type="project" value="UniProtKB-SubCell"/>
</dbReference>
<dbReference type="GO" id="GO:0004815">
    <property type="term" value="F:aspartate-tRNA ligase activity"/>
    <property type="evidence" value="ECO:0007669"/>
    <property type="project" value="UniProtKB-UniRule"/>
</dbReference>
<dbReference type="GO" id="GO:0050560">
    <property type="term" value="F:aspartate-tRNA(Asn) ligase activity"/>
    <property type="evidence" value="ECO:0007669"/>
    <property type="project" value="UniProtKB-EC"/>
</dbReference>
<dbReference type="GO" id="GO:0005524">
    <property type="term" value="F:ATP binding"/>
    <property type="evidence" value="ECO:0007669"/>
    <property type="project" value="UniProtKB-UniRule"/>
</dbReference>
<dbReference type="GO" id="GO:0140096">
    <property type="term" value="F:catalytic activity, acting on a protein"/>
    <property type="evidence" value="ECO:0007669"/>
    <property type="project" value="UniProtKB-ARBA"/>
</dbReference>
<dbReference type="GO" id="GO:0003676">
    <property type="term" value="F:nucleic acid binding"/>
    <property type="evidence" value="ECO:0007669"/>
    <property type="project" value="InterPro"/>
</dbReference>
<dbReference type="GO" id="GO:0016740">
    <property type="term" value="F:transferase activity"/>
    <property type="evidence" value="ECO:0007669"/>
    <property type="project" value="UniProtKB-ARBA"/>
</dbReference>
<dbReference type="GO" id="GO:0006422">
    <property type="term" value="P:aspartyl-tRNA aminoacylation"/>
    <property type="evidence" value="ECO:0007669"/>
    <property type="project" value="UniProtKB-UniRule"/>
</dbReference>
<dbReference type="CDD" id="cd00777">
    <property type="entry name" value="AspRS_core"/>
    <property type="match status" value="1"/>
</dbReference>
<dbReference type="CDD" id="cd04317">
    <property type="entry name" value="EcAspRS_like_N"/>
    <property type="match status" value="1"/>
</dbReference>
<dbReference type="Gene3D" id="3.30.930.10">
    <property type="entry name" value="Bira Bifunctional Protein, Domain 2"/>
    <property type="match status" value="1"/>
</dbReference>
<dbReference type="Gene3D" id="3.30.1360.30">
    <property type="entry name" value="GAD-like domain"/>
    <property type="match status" value="1"/>
</dbReference>
<dbReference type="Gene3D" id="2.40.50.140">
    <property type="entry name" value="Nucleic acid-binding proteins"/>
    <property type="match status" value="1"/>
</dbReference>
<dbReference type="HAMAP" id="MF_00044">
    <property type="entry name" value="Asp_tRNA_synth_type1"/>
    <property type="match status" value="1"/>
</dbReference>
<dbReference type="InterPro" id="IPR004364">
    <property type="entry name" value="Aa-tRNA-synt_II"/>
</dbReference>
<dbReference type="InterPro" id="IPR006195">
    <property type="entry name" value="aa-tRNA-synth_II"/>
</dbReference>
<dbReference type="InterPro" id="IPR045864">
    <property type="entry name" value="aa-tRNA-synth_II/BPL/LPL"/>
</dbReference>
<dbReference type="InterPro" id="IPR004524">
    <property type="entry name" value="Asp-tRNA-ligase_1"/>
</dbReference>
<dbReference type="InterPro" id="IPR047089">
    <property type="entry name" value="Asp-tRNA-ligase_1_N"/>
</dbReference>
<dbReference type="InterPro" id="IPR002312">
    <property type="entry name" value="Asp/Asn-tRNA-synth_IIb"/>
</dbReference>
<dbReference type="InterPro" id="IPR047090">
    <property type="entry name" value="AspRS_core"/>
</dbReference>
<dbReference type="InterPro" id="IPR004115">
    <property type="entry name" value="GAD-like_sf"/>
</dbReference>
<dbReference type="InterPro" id="IPR029351">
    <property type="entry name" value="GAD_dom"/>
</dbReference>
<dbReference type="InterPro" id="IPR012340">
    <property type="entry name" value="NA-bd_OB-fold"/>
</dbReference>
<dbReference type="InterPro" id="IPR004365">
    <property type="entry name" value="NA-bd_OB_tRNA"/>
</dbReference>
<dbReference type="NCBIfam" id="TIGR00459">
    <property type="entry name" value="aspS_bact"/>
    <property type="match status" value="1"/>
</dbReference>
<dbReference type="NCBIfam" id="NF001750">
    <property type="entry name" value="PRK00476.1"/>
    <property type="match status" value="1"/>
</dbReference>
<dbReference type="PANTHER" id="PTHR22594:SF5">
    <property type="entry name" value="ASPARTATE--TRNA LIGASE, MITOCHONDRIAL"/>
    <property type="match status" value="1"/>
</dbReference>
<dbReference type="PANTHER" id="PTHR22594">
    <property type="entry name" value="ASPARTYL/LYSYL-TRNA SYNTHETASE"/>
    <property type="match status" value="1"/>
</dbReference>
<dbReference type="Pfam" id="PF02938">
    <property type="entry name" value="GAD"/>
    <property type="match status" value="1"/>
</dbReference>
<dbReference type="Pfam" id="PF00152">
    <property type="entry name" value="tRNA-synt_2"/>
    <property type="match status" value="1"/>
</dbReference>
<dbReference type="Pfam" id="PF01336">
    <property type="entry name" value="tRNA_anti-codon"/>
    <property type="match status" value="1"/>
</dbReference>
<dbReference type="PRINTS" id="PR01042">
    <property type="entry name" value="TRNASYNTHASP"/>
</dbReference>
<dbReference type="SUPFAM" id="SSF55681">
    <property type="entry name" value="Class II aaRS and biotin synthetases"/>
    <property type="match status" value="1"/>
</dbReference>
<dbReference type="SUPFAM" id="SSF55261">
    <property type="entry name" value="GAD domain-like"/>
    <property type="match status" value="1"/>
</dbReference>
<dbReference type="SUPFAM" id="SSF50249">
    <property type="entry name" value="Nucleic acid-binding proteins"/>
    <property type="match status" value="1"/>
</dbReference>
<dbReference type="PROSITE" id="PS50862">
    <property type="entry name" value="AA_TRNA_LIGASE_II"/>
    <property type="match status" value="1"/>
</dbReference>
<proteinExistence type="inferred from homology"/>
<gene>
    <name evidence="1" type="primary">aspS</name>
    <name type="ordered locus">BAA_4650</name>
</gene>
<accession>C3P990</accession>
<protein>
    <recommendedName>
        <fullName evidence="1">Aspartate--tRNA(Asp/Asn) ligase</fullName>
        <ecNumber evidence="1">6.1.1.23</ecNumber>
    </recommendedName>
    <alternativeName>
        <fullName evidence="1">Aspartyl-tRNA synthetase</fullName>
        <shortName evidence="1">AspRS</shortName>
    </alternativeName>
    <alternativeName>
        <fullName evidence="1">Non-discriminating aspartyl-tRNA synthetase</fullName>
        <shortName evidence="1">ND-AspRS</shortName>
    </alternativeName>
</protein>
<evidence type="ECO:0000255" key="1">
    <source>
        <dbReference type="HAMAP-Rule" id="MF_00044"/>
    </source>
</evidence>
<name>SYDND_BACAA</name>
<reference key="1">
    <citation type="submission" date="2009-04" db="EMBL/GenBank/DDBJ databases">
        <title>Genome sequence of Bacillus anthracis A0248.</title>
        <authorList>
            <person name="Dodson R.J."/>
            <person name="Munk A.C."/>
            <person name="Bruce D."/>
            <person name="Detter C."/>
            <person name="Tapia R."/>
            <person name="Sutton G."/>
            <person name="Sims D."/>
            <person name="Brettin T."/>
        </authorList>
    </citation>
    <scope>NUCLEOTIDE SEQUENCE [LARGE SCALE GENOMIC DNA]</scope>
    <source>
        <strain>A0248</strain>
    </source>
</reference>
<comment type="function">
    <text evidence="1">Aspartyl-tRNA synthetase with relaxed tRNA specificity since it is able to aspartylate not only its cognate tRNA(Asp) but also tRNA(Asn). Reaction proceeds in two steps: L-aspartate is first activated by ATP to form Asp-AMP and then transferred to the acceptor end of tRNA(Asp/Asn).</text>
</comment>
<comment type="catalytic activity">
    <reaction evidence="1">
        <text>tRNA(Asx) + L-aspartate + ATP = L-aspartyl-tRNA(Asx) + AMP + diphosphate</text>
        <dbReference type="Rhea" id="RHEA:18349"/>
        <dbReference type="Rhea" id="RHEA-COMP:9710"/>
        <dbReference type="Rhea" id="RHEA-COMP:9711"/>
        <dbReference type="ChEBI" id="CHEBI:29991"/>
        <dbReference type="ChEBI" id="CHEBI:30616"/>
        <dbReference type="ChEBI" id="CHEBI:33019"/>
        <dbReference type="ChEBI" id="CHEBI:78442"/>
        <dbReference type="ChEBI" id="CHEBI:78516"/>
        <dbReference type="ChEBI" id="CHEBI:456215"/>
        <dbReference type="EC" id="6.1.1.23"/>
    </reaction>
</comment>
<comment type="subunit">
    <text evidence="1">Homodimer.</text>
</comment>
<comment type="subcellular location">
    <subcellularLocation>
        <location evidence="1">Cytoplasm</location>
    </subcellularLocation>
</comment>
<comment type="similarity">
    <text evidence="1">Belongs to the class-II aminoacyl-tRNA synthetase family. Type 1 subfamily.</text>
</comment>
<feature type="chain" id="PRO_1000198954" description="Aspartate--tRNA(Asp/Asn) ligase">
    <location>
        <begin position="1"/>
        <end position="591"/>
    </location>
</feature>
<feature type="region of interest" description="Aspartate" evidence="1">
    <location>
        <begin position="200"/>
        <end position="203"/>
    </location>
</feature>
<feature type="binding site" evidence="1">
    <location>
        <position position="176"/>
    </location>
    <ligand>
        <name>L-aspartate</name>
        <dbReference type="ChEBI" id="CHEBI:29991"/>
    </ligand>
</feature>
<feature type="binding site" evidence="1">
    <location>
        <begin position="222"/>
        <end position="224"/>
    </location>
    <ligand>
        <name>ATP</name>
        <dbReference type="ChEBI" id="CHEBI:30616"/>
    </ligand>
</feature>
<feature type="binding site" evidence="1">
    <location>
        <position position="222"/>
    </location>
    <ligand>
        <name>L-aspartate</name>
        <dbReference type="ChEBI" id="CHEBI:29991"/>
    </ligand>
</feature>
<feature type="binding site" evidence="1">
    <location>
        <position position="231"/>
    </location>
    <ligand>
        <name>ATP</name>
        <dbReference type="ChEBI" id="CHEBI:30616"/>
    </ligand>
</feature>
<feature type="binding site" evidence="1">
    <location>
        <position position="450"/>
    </location>
    <ligand>
        <name>L-aspartate</name>
        <dbReference type="ChEBI" id="CHEBI:29991"/>
    </ligand>
</feature>
<feature type="binding site" evidence="1">
    <location>
        <position position="484"/>
    </location>
    <ligand>
        <name>ATP</name>
        <dbReference type="ChEBI" id="CHEBI:30616"/>
    </ligand>
</feature>
<feature type="binding site" evidence="1">
    <location>
        <position position="491"/>
    </location>
    <ligand>
        <name>L-aspartate</name>
        <dbReference type="ChEBI" id="CHEBI:29991"/>
    </ligand>
</feature>
<feature type="binding site" evidence="1">
    <location>
        <begin position="536"/>
        <end position="539"/>
    </location>
    <ligand>
        <name>ATP</name>
        <dbReference type="ChEBI" id="CHEBI:30616"/>
    </ligand>
</feature>
<feature type="site" description="Important for tRNA non-discrimination" evidence="1">
    <location>
        <position position="84"/>
    </location>
</feature>
<sequence>MAERTHACGKVTVEAVGQTVQLKGWVQKRRDLGGLIFIDLRDRTGIVQVVFNPETSKEALEVAETIRSEYVLHVEGTVVERGEGAINDNMATGRIEVQATKVSVLNAAKTTPIIIADDTDASEDVRLKYRYLDLRRPVMFNTFKMRHDVTKTIRNFLDTEEFLEVETPILTKSTPEGARDYLVPSRVHDGEFYALPQSPQLFKQLLMVGGFERYYQVARCFRDEDLRADRQPEFTQIDIEASFLTQDEILDMMERMMTKVMKDAKGVEVSAPFPRMKYADAMARYGSDKPDTRFEMELTDLSEFAAGCGFKVFTSAVESGGQVKAINAKGAASKYSRKDIDALTEFVKVYGAKGLAWLKVEEDGLKGPIAKFFGEEDASVLMNTLEATAGDLLLFVADKKSVVADSLGALRLRLGKELELIDESKFNFLWVTDWPLLEYDEDADRYFAAHHPFTMPFREDVELLETAPEKARAQAYDLVLNGYELGGGSLRIYERDVQEKMFKALGFSQEEAQEQFGFLLEAFEYGTPPHGGIALGLDRLVMLLAGRTNLRDTIAFPKTASASCLLTEAPSPVAEAQLEELNLKLNVKEEK</sequence>
<organism>
    <name type="scientific">Bacillus anthracis (strain A0248)</name>
    <dbReference type="NCBI Taxonomy" id="592021"/>
    <lineage>
        <taxon>Bacteria</taxon>
        <taxon>Bacillati</taxon>
        <taxon>Bacillota</taxon>
        <taxon>Bacilli</taxon>
        <taxon>Bacillales</taxon>
        <taxon>Bacillaceae</taxon>
        <taxon>Bacillus</taxon>
        <taxon>Bacillus cereus group</taxon>
    </lineage>
</organism>
<keyword id="KW-0030">Aminoacyl-tRNA synthetase</keyword>
<keyword id="KW-0067">ATP-binding</keyword>
<keyword id="KW-0963">Cytoplasm</keyword>
<keyword id="KW-0436">Ligase</keyword>
<keyword id="KW-0547">Nucleotide-binding</keyword>
<keyword id="KW-0648">Protein biosynthesis</keyword>